<accession>P0DQT8</accession>
<reference key="1">
    <citation type="journal article" date="2013" name="Nat. Commun.">
        <title>The genome of Mesobuthus martensii reveals a unique adaptation model of arthropods.</title>
        <authorList>
            <person name="Cao Z."/>
            <person name="Yu Y."/>
            <person name="Wu Y."/>
            <person name="Hao P."/>
            <person name="Di Z."/>
            <person name="He Y."/>
            <person name="Chen Z."/>
            <person name="Yang W."/>
            <person name="Shen Z."/>
            <person name="He X."/>
            <person name="Sheng J."/>
            <person name="Xu X."/>
            <person name="Pan B."/>
            <person name="Feng J."/>
            <person name="Yang X."/>
            <person name="Hong W."/>
            <person name="Zhao W."/>
            <person name="Li Z."/>
            <person name="Huang K."/>
            <person name="Li T."/>
            <person name="Kong Y."/>
            <person name="Liu H."/>
            <person name="Jiang D."/>
            <person name="Zhang B."/>
            <person name="Hu J."/>
            <person name="Hu Y."/>
            <person name="Wang B."/>
            <person name="Dai J."/>
            <person name="Yuan B."/>
            <person name="Feng Y."/>
            <person name="Huang W."/>
            <person name="Xing X."/>
            <person name="Zhao G."/>
            <person name="Li X."/>
            <person name="Li Y."/>
            <person name="Li W."/>
        </authorList>
    </citation>
    <scope>NUCLEOTIDE SEQUENCE [LARGE SCALE GENOMIC DNA]</scope>
    <source>
        <tissue>Muscle</tissue>
    </source>
</reference>
<proteinExistence type="inferred from homology"/>
<name>DEF2_OLIMR</name>
<organism>
    <name type="scientific">Olivierus martensii</name>
    <name type="common">Manchurian scorpion</name>
    <name type="synonym">Mesobuthus martensii</name>
    <dbReference type="NCBI Taxonomy" id="34649"/>
    <lineage>
        <taxon>Eukaryota</taxon>
        <taxon>Metazoa</taxon>
        <taxon>Ecdysozoa</taxon>
        <taxon>Arthropoda</taxon>
        <taxon>Chelicerata</taxon>
        <taxon>Arachnida</taxon>
        <taxon>Scorpiones</taxon>
        <taxon>Buthida</taxon>
        <taxon>Buthoidea</taxon>
        <taxon>Buthidae</taxon>
        <taxon>Olivierus</taxon>
    </lineage>
</organism>
<protein>
    <recommendedName>
        <fullName evidence="5">Defensin BmKDfsin2</fullName>
    </recommendedName>
</protein>
<keyword id="KW-0044">Antibiotic</keyword>
<keyword id="KW-0929">Antimicrobial</keyword>
<keyword id="KW-1221">Calcium-activated potassium channel impairing toxin</keyword>
<keyword id="KW-0211">Defensin</keyword>
<keyword id="KW-1015">Disulfide bond</keyword>
<keyword id="KW-0391">Immunity</keyword>
<keyword id="KW-0399">Innate immunity</keyword>
<keyword id="KW-0872">Ion channel impairing toxin</keyword>
<keyword id="KW-0632">Potassium channel impairing toxin</keyword>
<keyword id="KW-0964">Secreted</keyword>
<keyword id="KW-0732">Signal</keyword>
<keyword id="KW-0800">Toxin</keyword>
<keyword id="KW-1220">Voltage-gated potassium channel impairing toxin</keyword>
<feature type="signal peptide" evidence="3">
    <location>
        <begin position="1"/>
        <end position="24"/>
    </location>
</feature>
<feature type="chain" id="PRO_0000455526" description="Defensin BmKDfsin2" evidence="6">
    <location>
        <begin position="25"/>
        <end position="61"/>
    </location>
</feature>
<feature type="disulfide bond" evidence="1">
    <location>
        <begin position="28"/>
        <end position="49"/>
    </location>
</feature>
<feature type="disulfide bond" evidence="1">
    <location>
        <begin position="35"/>
        <end position="57"/>
    </location>
</feature>
<feature type="disulfide bond" evidence="1">
    <location>
        <begin position="39"/>
        <end position="59"/>
    </location>
</feature>
<comment type="function">
    <text evidence="1 2">Antibacterial peptide active against Gram-positive bacteria, but not on Gram-negative bacteria (By similarity). Also has weak blocking activity on Kv1.1/KCNA1, Kv1.2/KCNA2, Kv1.3/KCNA3, KCa3.1/KCNN4/IK, KCa2.3/KCNN3/SK3 and Kv11.1/KCNH2/ERG1 channels (tested at 1 uM) (By similarity). It inhibits potassium channel current by interacting with the pore region (By similarity).</text>
</comment>
<comment type="subcellular location">
    <subcellularLocation>
        <location evidence="6">Secreted</location>
    </subcellularLocation>
</comment>
<comment type="tissue specificity">
    <text evidence="2">Highly expressed in non-venom gland (hemolymph) and moderately expressed in venom gland.</text>
</comment>
<comment type="similarity">
    <text evidence="4">Belongs to the invertebrate defensin family. Type 2 subfamily.</text>
</comment>
<sequence>METIVLLFLLALVFCTLEMGMVEAEHGCPDNEDECHEHCKSIGKSGGYCVGPHKQTCRCNP</sequence>
<dbReference type="SMR" id="P0DQT8"/>
<dbReference type="GO" id="GO:0005576">
    <property type="term" value="C:extracellular region"/>
    <property type="evidence" value="ECO:0007669"/>
    <property type="project" value="UniProtKB-SubCell"/>
</dbReference>
<dbReference type="GO" id="GO:0015459">
    <property type="term" value="F:potassium channel regulator activity"/>
    <property type="evidence" value="ECO:0007669"/>
    <property type="project" value="UniProtKB-KW"/>
</dbReference>
<dbReference type="GO" id="GO:0090729">
    <property type="term" value="F:toxin activity"/>
    <property type="evidence" value="ECO:0007669"/>
    <property type="project" value="UniProtKB-KW"/>
</dbReference>
<dbReference type="GO" id="GO:0042742">
    <property type="term" value="P:defense response to bacterium"/>
    <property type="evidence" value="ECO:0007669"/>
    <property type="project" value="UniProtKB-KW"/>
</dbReference>
<dbReference type="GO" id="GO:0045087">
    <property type="term" value="P:innate immune response"/>
    <property type="evidence" value="ECO:0007669"/>
    <property type="project" value="UniProtKB-KW"/>
</dbReference>
<dbReference type="Gene3D" id="3.30.30.10">
    <property type="entry name" value="Knottin, scorpion toxin-like"/>
    <property type="match status" value="1"/>
</dbReference>
<dbReference type="InterPro" id="IPR001542">
    <property type="entry name" value="Defensin_invertebrate/fungal"/>
</dbReference>
<dbReference type="InterPro" id="IPR036574">
    <property type="entry name" value="Scorpion_toxin-like_sf"/>
</dbReference>
<dbReference type="Pfam" id="PF01097">
    <property type="entry name" value="Defensin_2"/>
    <property type="match status" value="1"/>
</dbReference>
<dbReference type="SUPFAM" id="SSF57095">
    <property type="entry name" value="Scorpion toxin-like"/>
    <property type="match status" value="1"/>
</dbReference>
<dbReference type="PROSITE" id="PS51378">
    <property type="entry name" value="INVERT_DEFENSINS"/>
    <property type="match status" value="1"/>
</dbReference>
<evidence type="ECO:0000250" key="1">
    <source>
        <dbReference type="UniProtKB" id="A0A384E0Y8"/>
    </source>
</evidence>
<evidence type="ECO:0000250" key="2">
    <source>
        <dbReference type="UniProtKB" id="P0DQU0"/>
    </source>
</evidence>
<evidence type="ECO:0000255" key="3"/>
<evidence type="ECO:0000255" key="4">
    <source>
        <dbReference type="PROSITE-ProRule" id="PRU00710"/>
    </source>
</evidence>
<evidence type="ECO:0000303" key="5">
    <source>
    </source>
</evidence>
<evidence type="ECO:0000305" key="6">
    <source>
    </source>
</evidence>